<organism>
    <name type="scientific">Bos taurus</name>
    <name type="common">Bovine</name>
    <dbReference type="NCBI Taxonomy" id="9913"/>
    <lineage>
        <taxon>Eukaryota</taxon>
        <taxon>Metazoa</taxon>
        <taxon>Chordata</taxon>
        <taxon>Craniata</taxon>
        <taxon>Vertebrata</taxon>
        <taxon>Euteleostomi</taxon>
        <taxon>Mammalia</taxon>
        <taxon>Eutheria</taxon>
        <taxon>Laurasiatheria</taxon>
        <taxon>Artiodactyla</taxon>
        <taxon>Ruminantia</taxon>
        <taxon>Pecora</taxon>
        <taxon>Bovidae</taxon>
        <taxon>Bovinae</taxon>
        <taxon>Bos</taxon>
    </lineage>
</organism>
<reference key="1">
    <citation type="submission" date="2006-09" db="EMBL/GenBank/DDBJ databases">
        <authorList>
            <consortium name="NIH - Mammalian Gene Collection (MGC) project"/>
        </authorList>
    </citation>
    <scope>NUCLEOTIDE SEQUENCE [LARGE SCALE MRNA]</scope>
    <source>
        <strain>Hereford</strain>
        <tissue>Fetal skin</tissue>
    </source>
</reference>
<evidence type="ECO:0000250" key="1">
    <source>
        <dbReference type="UniProtKB" id="Q9C0F1"/>
    </source>
</evidence>
<evidence type="ECO:0000255" key="2"/>
<evidence type="ECO:0000256" key="3">
    <source>
        <dbReference type="SAM" id="MobiDB-lite"/>
    </source>
</evidence>
<name>CEP44_BOVIN</name>
<proteinExistence type="evidence at transcript level"/>
<dbReference type="EMBL" id="BC123850">
    <property type="protein sequence ID" value="AAI23851.1"/>
    <property type="molecule type" value="mRNA"/>
</dbReference>
<dbReference type="RefSeq" id="NP_001070301.1">
    <property type="nucleotide sequence ID" value="NM_001076833.1"/>
</dbReference>
<dbReference type="SMR" id="Q08DB0"/>
<dbReference type="FunCoup" id="Q08DB0">
    <property type="interactions" value="2448"/>
</dbReference>
<dbReference type="STRING" id="9913.ENSBTAP00000057268"/>
<dbReference type="PaxDb" id="9913-ENSBTAP00000026720"/>
<dbReference type="GeneID" id="510950"/>
<dbReference type="KEGG" id="bta:510950"/>
<dbReference type="CTD" id="80817"/>
<dbReference type="eggNOG" id="ENOG502R3RQ">
    <property type="taxonomic scope" value="Eukaryota"/>
</dbReference>
<dbReference type="InParanoid" id="Q08DB0"/>
<dbReference type="OrthoDB" id="259598at2759"/>
<dbReference type="Proteomes" id="UP000009136">
    <property type="component" value="Unplaced"/>
</dbReference>
<dbReference type="GO" id="GO:0005814">
    <property type="term" value="C:centriole"/>
    <property type="evidence" value="ECO:0000250"/>
    <property type="project" value="UniProtKB"/>
</dbReference>
<dbReference type="GO" id="GO:0005813">
    <property type="term" value="C:centrosome"/>
    <property type="evidence" value="ECO:0000250"/>
    <property type="project" value="UniProtKB"/>
</dbReference>
<dbReference type="GO" id="GO:0005737">
    <property type="term" value="C:cytoplasm"/>
    <property type="evidence" value="ECO:0007669"/>
    <property type="project" value="UniProtKB-KW"/>
</dbReference>
<dbReference type="GO" id="GO:0030496">
    <property type="term" value="C:midbody"/>
    <property type="evidence" value="ECO:0007669"/>
    <property type="project" value="UniProtKB-SubCell"/>
</dbReference>
<dbReference type="GO" id="GO:0000922">
    <property type="term" value="C:spindle pole"/>
    <property type="evidence" value="ECO:0000250"/>
    <property type="project" value="UniProtKB"/>
</dbReference>
<dbReference type="GO" id="GO:0008017">
    <property type="term" value="F:microtubule binding"/>
    <property type="evidence" value="ECO:0000250"/>
    <property type="project" value="UniProtKB"/>
</dbReference>
<dbReference type="GO" id="GO:0007099">
    <property type="term" value="P:centriole replication"/>
    <property type="evidence" value="ECO:0000250"/>
    <property type="project" value="UniProtKB"/>
</dbReference>
<dbReference type="GO" id="GO:0010457">
    <property type="term" value="P:centriole-centriole cohesion"/>
    <property type="evidence" value="ECO:0000250"/>
    <property type="project" value="UniProtKB"/>
</dbReference>
<dbReference type="GO" id="GO:0007098">
    <property type="term" value="P:centrosome cycle"/>
    <property type="evidence" value="ECO:0000250"/>
    <property type="project" value="UniProtKB"/>
</dbReference>
<dbReference type="InterPro" id="IPR033603">
    <property type="entry name" value="CEP44"/>
</dbReference>
<dbReference type="InterPro" id="IPR029157">
    <property type="entry name" value="CEP44_CC"/>
</dbReference>
<dbReference type="PANTHER" id="PTHR31477">
    <property type="entry name" value="CENTROSOMAL PROTEIN OF 44 KDA"/>
    <property type="match status" value="1"/>
</dbReference>
<dbReference type="PANTHER" id="PTHR31477:SF1">
    <property type="entry name" value="CENTROSOMAL PROTEIN OF 44 KDA"/>
    <property type="match status" value="1"/>
</dbReference>
<dbReference type="Pfam" id="PF15007">
    <property type="entry name" value="CEP44"/>
    <property type="match status" value="1"/>
</dbReference>
<feature type="chain" id="PRO_0000293721" description="Centrosomal protein of 44 kDa">
    <location>
        <begin position="1"/>
        <end position="385"/>
    </location>
</feature>
<feature type="region of interest" description="Binds with microtubules and centrioles" evidence="1">
    <location>
        <begin position="11"/>
        <end position="192"/>
    </location>
</feature>
<feature type="region of interest" description="Disordered" evidence="3">
    <location>
        <begin position="126"/>
        <end position="154"/>
    </location>
</feature>
<feature type="region of interest" description="Disordered" evidence="3">
    <location>
        <begin position="303"/>
        <end position="348"/>
    </location>
</feature>
<feature type="coiled-coil region" evidence="2">
    <location>
        <begin position="230"/>
        <end position="271"/>
    </location>
</feature>
<feature type="coiled-coil region" evidence="2">
    <location>
        <begin position="358"/>
        <end position="381"/>
    </location>
</feature>
<feature type="compositionally biased region" description="Polar residues" evidence="3">
    <location>
        <begin position="139"/>
        <end position="154"/>
    </location>
</feature>
<feature type="compositionally biased region" description="Low complexity" evidence="3">
    <location>
        <begin position="305"/>
        <end position="314"/>
    </location>
</feature>
<feature type="compositionally biased region" description="Basic and acidic residues" evidence="3">
    <location>
        <begin position="316"/>
        <end position="327"/>
    </location>
</feature>
<feature type="compositionally biased region" description="Low complexity" evidence="3">
    <location>
        <begin position="332"/>
        <end position="342"/>
    </location>
</feature>
<feature type="modified residue" description="Phosphoserine" evidence="1">
    <location>
        <position position="342"/>
    </location>
</feature>
<feature type="modified residue" description="Phosphothreonine" evidence="1">
    <location>
        <position position="343"/>
    </location>
</feature>
<accession>Q08DB0</accession>
<sequence length="385" mass="43580">MATGDLKRSLRNLEQVLRSLNYPREVDCVGLVKGDTAASLPIISYSLTSYSPYVAELLVDSNIELLAKNDLRFIDTVYKLLRDQFNYKPILTKKQFIQCGFAEWKIQIICDILNCVMKKHKELSSLEKTPSQQRKKTSSAKSEPCSSTEKTSTEPVGIDVTGRFVTSGKKKAVVIRHLYNEDGANIPEDTVTDVNEAFDVCDIKAAEITIPELQVPDINCEQEDITVNPEVTALQSMLAECQEKLKKLTCIESRLESLEEKMKGKVLVNEKTWANLLSRVTLLETEMLLSKKNDEYMQFNEMSEDYSSSSDMDSLNPDRKSKEERHANIPLSSGYSTVSSDSTPRTSTVNYCGLKEISEETTMQKMERMKKMFEETAELLKCPNH</sequence>
<gene>
    <name type="primary">CEP44</name>
</gene>
<keyword id="KW-0175">Coiled coil</keyword>
<keyword id="KW-0963">Cytoplasm</keyword>
<keyword id="KW-0206">Cytoskeleton</keyword>
<keyword id="KW-0597">Phosphoprotein</keyword>
<keyword id="KW-1185">Reference proteome</keyword>
<comment type="function">
    <text evidence="1">Centriole-enriched microtubule-binding protein involved in centriole biogenesis. In collaboration with CEP295 and POC1B, is required for the centriole-to-centrosome conversion by ensuring the formation of bona fide centriole wall. Functions as a linker component that maintains centrosome cohesion. Associates with CROCC and regulates its stability and localization to the centrosome.</text>
</comment>
<comment type="subunit">
    <text evidence="1">Interacts with CROCC. Interacts with POC1B; the interaction is direct and recruits POC1B to centriolar microtubules. Binds to centriolar microtubules.</text>
</comment>
<comment type="subcellular location">
    <subcellularLocation>
        <location evidence="1">Cytoplasm</location>
        <location evidence="1">Cytoskeleton</location>
        <location evidence="1">Microtubule organizing center</location>
        <location evidence="1">Centrosome</location>
    </subcellularLocation>
    <subcellularLocation>
        <location evidence="1">Cytoplasm</location>
        <location evidence="1">Cytoskeleton</location>
        <location evidence="1">Microtubule organizing center</location>
        <location evidence="1">Centrosome</location>
        <location evidence="1">Centriole</location>
    </subcellularLocation>
    <subcellularLocation>
        <location evidence="1">Cytoplasm</location>
        <location evidence="1">Cytoskeleton</location>
        <location evidence="1">Spindle pole</location>
    </subcellularLocation>
    <subcellularLocation>
        <location evidence="1">Midbody</location>
    </subcellularLocation>
    <text evidence="1">Localizes to the proximal end of mother and daughter centrioles.</text>
</comment>
<protein>
    <recommendedName>
        <fullName>Centrosomal protein of 44 kDa</fullName>
        <shortName>Cep44</shortName>
    </recommendedName>
</protein>